<feature type="chain" id="PRO_0000319441" description="Thiosulfate sulfurtransferase GlpE">
    <location>
        <begin position="1"/>
        <end position="111"/>
    </location>
</feature>
<feature type="domain" description="Rhodanese" evidence="1">
    <location>
        <begin position="16"/>
        <end position="104"/>
    </location>
</feature>
<feature type="active site" description="Cysteine persulfide intermediate" evidence="1">
    <location>
        <position position="64"/>
    </location>
</feature>
<name>GLPE_ACTSZ</name>
<protein>
    <recommendedName>
        <fullName evidence="1">Thiosulfate sulfurtransferase GlpE</fullName>
        <ecNumber evidence="1">2.8.1.1</ecNumber>
    </recommendedName>
</protein>
<reference key="1">
    <citation type="journal article" date="2010" name="BMC Genomics">
        <title>A genomic perspective on the potential of Actinobacillus succinogenes for industrial succinate production.</title>
        <authorList>
            <person name="McKinlay J.B."/>
            <person name="Laivenieks M."/>
            <person name="Schindler B.D."/>
            <person name="McKinlay A.A."/>
            <person name="Siddaramappa S."/>
            <person name="Challacombe J.F."/>
            <person name="Lowry S.R."/>
            <person name="Clum A."/>
            <person name="Lapidus A.L."/>
            <person name="Burkhart K.B."/>
            <person name="Harkins V."/>
            <person name="Vieille C."/>
        </authorList>
    </citation>
    <scope>NUCLEOTIDE SEQUENCE [LARGE SCALE GENOMIC DNA]</scope>
    <source>
        <strain>ATCC 55618 / DSM 22257 / CCUG 43843 / 130Z</strain>
    </source>
</reference>
<proteinExistence type="inferred from homology"/>
<evidence type="ECO:0000255" key="1">
    <source>
        <dbReference type="HAMAP-Rule" id="MF_01009"/>
    </source>
</evidence>
<gene>
    <name evidence="1" type="primary">glpE</name>
    <name type="ordered locus">Asuc_0089</name>
</gene>
<accession>A6VKH3</accession>
<organism>
    <name type="scientific">Actinobacillus succinogenes (strain ATCC 55618 / DSM 22257 / CCUG 43843 / 130Z)</name>
    <dbReference type="NCBI Taxonomy" id="339671"/>
    <lineage>
        <taxon>Bacteria</taxon>
        <taxon>Pseudomonadati</taxon>
        <taxon>Pseudomonadota</taxon>
        <taxon>Gammaproteobacteria</taxon>
        <taxon>Pasteurellales</taxon>
        <taxon>Pasteurellaceae</taxon>
        <taxon>Actinobacillus</taxon>
    </lineage>
</organism>
<sequence>MAFTEITPERAWDMIQTENAVLLDVRDAERFSYSRAQGAFHLTNQSYGEFQDTYDFDHPVIVSCYHGISSRSIAAFLAEQGYDNVYSVIGGFEGWQRAGLPMETAYGVKPI</sequence>
<keyword id="KW-0963">Cytoplasm</keyword>
<keyword id="KW-1185">Reference proteome</keyword>
<keyword id="KW-0808">Transferase</keyword>
<comment type="function">
    <text evidence="1">Transferase that catalyzes the transfer of sulfur from thiosulfate to thiophilic acceptors such as cyanide or dithiols. May function in a CysM-independent thiosulfate assimilation pathway by catalyzing the conversion of thiosulfate to sulfite, which can then be used for L-cysteine biosynthesis.</text>
</comment>
<comment type="catalytic activity">
    <reaction evidence="1">
        <text>thiosulfate + hydrogen cyanide = thiocyanate + sulfite + 2 H(+)</text>
        <dbReference type="Rhea" id="RHEA:16881"/>
        <dbReference type="ChEBI" id="CHEBI:15378"/>
        <dbReference type="ChEBI" id="CHEBI:17359"/>
        <dbReference type="ChEBI" id="CHEBI:18022"/>
        <dbReference type="ChEBI" id="CHEBI:18407"/>
        <dbReference type="ChEBI" id="CHEBI:33542"/>
        <dbReference type="EC" id="2.8.1.1"/>
    </reaction>
</comment>
<comment type="catalytic activity">
    <reaction evidence="1">
        <text>thiosulfate + [thioredoxin]-dithiol = [thioredoxin]-disulfide + hydrogen sulfide + sulfite + 2 H(+)</text>
        <dbReference type="Rhea" id="RHEA:83859"/>
        <dbReference type="Rhea" id="RHEA-COMP:10698"/>
        <dbReference type="Rhea" id="RHEA-COMP:10700"/>
        <dbReference type="ChEBI" id="CHEBI:15378"/>
        <dbReference type="ChEBI" id="CHEBI:17359"/>
        <dbReference type="ChEBI" id="CHEBI:29919"/>
        <dbReference type="ChEBI" id="CHEBI:29950"/>
        <dbReference type="ChEBI" id="CHEBI:33542"/>
        <dbReference type="ChEBI" id="CHEBI:50058"/>
    </reaction>
</comment>
<comment type="subcellular location">
    <subcellularLocation>
        <location evidence="1">Cytoplasm</location>
    </subcellularLocation>
</comment>
<comment type="similarity">
    <text evidence="1">Belongs to the GlpE family.</text>
</comment>
<dbReference type="EC" id="2.8.1.1" evidence="1"/>
<dbReference type="EMBL" id="CP000746">
    <property type="protein sequence ID" value="ABR73470.1"/>
    <property type="molecule type" value="Genomic_DNA"/>
</dbReference>
<dbReference type="RefSeq" id="WP_011978746.1">
    <property type="nucleotide sequence ID" value="NC_009655.1"/>
</dbReference>
<dbReference type="SMR" id="A6VKH3"/>
<dbReference type="STRING" id="339671.Asuc_0089"/>
<dbReference type="KEGG" id="asu:Asuc_0089"/>
<dbReference type="eggNOG" id="COG0607">
    <property type="taxonomic scope" value="Bacteria"/>
</dbReference>
<dbReference type="HOGENOM" id="CLU_089574_14_0_6"/>
<dbReference type="Proteomes" id="UP000001114">
    <property type="component" value="Chromosome"/>
</dbReference>
<dbReference type="GO" id="GO:0005737">
    <property type="term" value="C:cytoplasm"/>
    <property type="evidence" value="ECO:0007669"/>
    <property type="project" value="UniProtKB-SubCell"/>
</dbReference>
<dbReference type="GO" id="GO:0004792">
    <property type="term" value="F:thiosulfate-cyanide sulfurtransferase activity"/>
    <property type="evidence" value="ECO:0007669"/>
    <property type="project" value="UniProtKB-UniRule"/>
</dbReference>
<dbReference type="GO" id="GO:0006071">
    <property type="term" value="P:glycerol metabolic process"/>
    <property type="evidence" value="ECO:0007669"/>
    <property type="project" value="UniProtKB-UniRule"/>
</dbReference>
<dbReference type="CDD" id="cd01444">
    <property type="entry name" value="GlpE_ST"/>
    <property type="match status" value="1"/>
</dbReference>
<dbReference type="Gene3D" id="3.40.250.10">
    <property type="entry name" value="Rhodanese-like domain"/>
    <property type="match status" value="1"/>
</dbReference>
<dbReference type="HAMAP" id="MF_01009">
    <property type="entry name" value="Thiosulf_sulfurtr"/>
    <property type="match status" value="1"/>
</dbReference>
<dbReference type="InterPro" id="IPR050229">
    <property type="entry name" value="GlpE_sulfurtransferase"/>
</dbReference>
<dbReference type="InterPro" id="IPR001763">
    <property type="entry name" value="Rhodanese-like_dom"/>
</dbReference>
<dbReference type="InterPro" id="IPR036873">
    <property type="entry name" value="Rhodanese-like_dom_sf"/>
</dbReference>
<dbReference type="InterPro" id="IPR023695">
    <property type="entry name" value="Thiosulf_sulfurTrfase"/>
</dbReference>
<dbReference type="NCBIfam" id="NF001195">
    <property type="entry name" value="PRK00162.1"/>
    <property type="match status" value="1"/>
</dbReference>
<dbReference type="PANTHER" id="PTHR43031">
    <property type="entry name" value="FAD-DEPENDENT OXIDOREDUCTASE"/>
    <property type="match status" value="1"/>
</dbReference>
<dbReference type="PANTHER" id="PTHR43031:SF6">
    <property type="entry name" value="THIOSULFATE SULFURTRANSFERASE GLPE"/>
    <property type="match status" value="1"/>
</dbReference>
<dbReference type="Pfam" id="PF00581">
    <property type="entry name" value="Rhodanese"/>
    <property type="match status" value="1"/>
</dbReference>
<dbReference type="SMART" id="SM00450">
    <property type="entry name" value="RHOD"/>
    <property type="match status" value="1"/>
</dbReference>
<dbReference type="SUPFAM" id="SSF52821">
    <property type="entry name" value="Rhodanese/Cell cycle control phosphatase"/>
    <property type="match status" value="1"/>
</dbReference>
<dbReference type="PROSITE" id="PS50206">
    <property type="entry name" value="RHODANESE_3"/>
    <property type="match status" value="1"/>
</dbReference>